<protein>
    <recommendedName>
        <fullName evidence="6">SAGA-associated factor 29 homolog A</fullName>
        <shortName evidence="5">AtSGF29a</shortName>
    </recommendedName>
    <alternativeName>
        <fullName evidence="6">29 kDa SAGA-associated factor homolog A</fullName>
    </alternativeName>
</protein>
<accession>Q8RXY6</accession>
<accession>Q9LTY5</accession>
<reference key="1">
    <citation type="journal article" date="2000" name="DNA Res.">
        <title>Structural analysis of Arabidopsis thaliana chromosome 3. I. Sequence features of the regions of 4,504,864 bp covered by sixty P1 and TAC clones.</title>
        <authorList>
            <person name="Sato S."/>
            <person name="Nakamura Y."/>
            <person name="Kaneko T."/>
            <person name="Katoh T."/>
            <person name="Asamizu E."/>
            <person name="Tabata S."/>
        </authorList>
    </citation>
    <scope>NUCLEOTIDE SEQUENCE [LARGE SCALE GENOMIC DNA]</scope>
    <source>
        <strain>cv. Columbia</strain>
    </source>
</reference>
<reference key="2">
    <citation type="journal article" date="2017" name="Plant J.">
        <title>Araport11: a complete reannotation of the Arabidopsis thaliana reference genome.</title>
        <authorList>
            <person name="Cheng C.Y."/>
            <person name="Krishnakumar V."/>
            <person name="Chan A.P."/>
            <person name="Thibaud-Nissen F."/>
            <person name="Schobel S."/>
            <person name="Town C.D."/>
        </authorList>
    </citation>
    <scope>GENOME REANNOTATION</scope>
    <source>
        <strain>cv. Columbia</strain>
    </source>
</reference>
<reference key="3">
    <citation type="journal article" date="2003" name="Science">
        <title>Empirical analysis of transcriptional activity in the Arabidopsis genome.</title>
        <authorList>
            <person name="Yamada K."/>
            <person name="Lim J."/>
            <person name="Dale J.M."/>
            <person name="Chen H."/>
            <person name="Shinn P."/>
            <person name="Palm C.J."/>
            <person name="Southwick A.M."/>
            <person name="Wu H.C."/>
            <person name="Kim C.J."/>
            <person name="Nguyen M."/>
            <person name="Pham P.K."/>
            <person name="Cheuk R.F."/>
            <person name="Karlin-Newmann G."/>
            <person name="Liu S.X."/>
            <person name="Lam B."/>
            <person name="Sakano H."/>
            <person name="Wu T."/>
            <person name="Yu G."/>
            <person name="Miranda M."/>
            <person name="Quach H.L."/>
            <person name="Tripp M."/>
            <person name="Chang C.H."/>
            <person name="Lee J.M."/>
            <person name="Toriumi M.J."/>
            <person name="Chan M.M."/>
            <person name="Tang C.C."/>
            <person name="Onodera C.S."/>
            <person name="Deng J.M."/>
            <person name="Akiyama K."/>
            <person name="Ansari Y."/>
            <person name="Arakawa T."/>
            <person name="Banh J."/>
            <person name="Banno F."/>
            <person name="Bowser L."/>
            <person name="Brooks S.Y."/>
            <person name="Carninci P."/>
            <person name="Chao Q."/>
            <person name="Choy N."/>
            <person name="Enju A."/>
            <person name="Goldsmith A.D."/>
            <person name="Gurjal M."/>
            <person name="Hansen N.F."/>
            <person name="Hayashizaki Y."/>
            <person name="Johnson-Hopson C."/>
            <person name="Hsuan V.W."/>
            <person name="Iida K."/>
            <person name="Karnes M."/>
            <person name="Khan S."/>
            <person name="Koesema E."/>
            <person name="Ishida J."/>
            <person name="Jiang P.X."/>
            <person name="Jones T."/>
            <person name="Kawai J."/>
            <person name="Kamiya A."/>
            <person name="Meyers C."/>
            <person name="Nakajima M."/>
            <person name="Narusaka M."/>
            <person name="Seki M."/>
            <person name="Sakurai T."/>
            <person name="Satou M."/>
            <person name="Tamse R."/>
            <person name="Vaysberg M."/>
            <person name="Wallender E.K."/>
            <person name="Wong C."/>
            <person name="Yamamura Y."/>
            <person name="Yuan S."/>
            <person name="Shinozaki K."/>
            <person name="Davis R.W."/>
            <person name="Theologis A."/>
            <person name="Ecker J.R."/>
        </authorList>
    </citation>
    <scope>NUCLEOTIDE SEQUENCE [LARGE SCALE MRNA]</scope>
    <source>
        <strain>cv. Columbia</strain>
    </source>
</reference>
<reference key="4">
    <citation type="journal article" date="2011" name="Planta">
        <title>Arabidopsis thaliana transcriptional co-activators ADA2b and SGF29a are implicated in salt stress responses.</title>
        <authorList>
            <person name="Kaldis A."/>
            <person name="Tsementzi D."/>
            <person name="Tanriverdi O."/>
            <person name="Vlachonasios K.E."/>
        </authorList>
    </citation>
    <scope>FUNCTION</scope>
    <scope>TISSUE SPECIFICITY</scope>
    <scope>DISRUPTION PHENOTYPE</scope>
</reference>
<reference key="5">
    <citation type="journal article" date="2012" name="Mol. Cell. Proteomics">
        <title>Comparative large-scale characterisation of plant vs. mammal proteins reveals similar and idiosyncratic N-alpha acetylation features.</title>
        <authorList>
            <person name="Bienvenut W.V."/>
            <person name="Sumpton D."/>
            <person name="Martinez A."/>
            <person name="Lilla S."/>
            <person name="Espagne C."/>
            <person name="Meinnel T."/>
            <person name="Giglione C."/>
        </authorList>
    </citation>
    <scope>ACETYLATION [LARGE SCALE ANALYSIS] AT SER-2</scope>
    <scope>CLEAVAGE OF INITIATOR METHIONINE [LARGE SCALE ANALYSIS]</scope>
    <scope>IDENTIFICATION BY MASS SPECTROMETRY [LARGE SCALE ANALYSIS]</scope>
</reference>
<dbReference type="EMBL" id="AB024028">
    <property type="protein sequence ID" value="BAA95721.1"/>
    <property type="status" value="ALT_SEQ"/>
    <property type="molecule type" value="Genomic_DNA"/>
</dbReference>
<dbReference type="EMBL" id="CP002686">
    <property type="protein sequence ID" value="AEE77322.1"/>
    <property type="molecule type" value="Genomic_DNA"/>
</dbReference>
<dbReference type="EMBL" id="AY080609">
    <property type="protein sequence ID" value="AAL86293.1"/>
    <property type="molecule type" value="mRNA"/>
</dbReference>
<dbReference type="EMBL" id="AY122985">
    <property type="protein sequence ID" value="AAM67518.1"/>
    <property type="molecule type" value="mRNA"/>
</dbReference>
<dbReference type="RefSeq" id="NP_189382.2">
    <property type="nucleotide sequence ID" value="NM_113661.4"/>
</dbReference>
<dbReference type="SMR" id="Q8RXY6"/>
<dbReference type="FunCoup" id="Q8RXY6">
    <property type="interactions" value="1741"/>
</dbReference>
<dbReference type="STRING" id="3702.Q8RXY6"/>
<dbReference type="iPTMnet" id="Q8RXY6"/>
<dbReference type="PaxDb" id="3702-AT3G27460.1"/>
<dbReference type="EnsemblPlants" id="AT3G27460.1">
    <property type="protein sequence ID" value="AT3G27460.1"/>
    <property type="gene ID" value="AT3G27460"/>
</dbReference>
<dbReference type="GeneID" id="822367"/>
<dbReference type="Gramene" id="AT3G27460.1">
    <property type="protein sequence ID" value="AT3G27460.1"/>
    <property type="gene ID" value="AT3G27460"/>
</dbReference>
<dbReference type="KEGG" id="ath:AT3G27460"/>
<dbReference type="Araport" id="AT3G27460"/>
<dbReference type="TAIR" id="AT3G27460">
    <property type="gene designation" value="SGF29A"/>
</dbReference>
<dbReference type="eggNOG" id="KOG3038">
    <property type="taxonomic scope" value="Eukaryota"/>
</dbReference>
<dbReference type="HOGENOM" id="CLU_065257_0_0_1"/>
<dbReference type="InParanoid" id="Q8RXY6"/>
<dbReference type="OMA" id="EPTYIAK"/>
<dbReference type="OrthoDB" id="10265994at2759"/>
<dbReference type="PhylomeDB" id="Q8RXY6"/>
<dbReference type="PRO" id="PR:Q8RXY6"/>
<dbReference type="Proteomes" id="UP000006548">
    <property type="component" value="Chromosome 3"/>
</dbReference>
<dbReference type="ExpressionAtlas" id="Q8RXY6">
    <property type="expression patterns" value="baseline and differential"/>
</dbReference>
<dbReference type="GO" id="GO:0005634">
    <property type="term" value="C:nucleus"/>
    <property type="evidence" value="ECO:0000314"/>
    <property type="project" value="TAIR"/>
</dbReference>
<dbReference type="GO" id="GO:0000124">
    <property type="term" value="C:SAGA complex"/>
    <property type="evidence" value="ECO:0007669"/>
    <property type="project" value="InterPro"/>
</dbReference>
<dbReference type="GO" id="GO:0006325">
    <property type="term" value="P:chromatin organization"/>
    <property type="evidence" value="ECO:0007669"/>
    <property type="project" value="UniProtKB-KW"/>
</dbReference>
<dbReference type="GO" id="GO:0009651">
    <property type="term" value="P:response to salt stress"/>
    <property type="evidence" value="ECO:0000315"/>
    <property type="project" value="TAIR"/>
</dbReference>
<dbReference type="CDD" id="cd20393">
    <property type="entry name" value="Tudor_SGF29_rpt1"/>
    <property type="match status" value="1"/>
</dbReference>
<dbReference type="CDD" id="cd20394">
    <property type="entry name" value="Tudor_SGF29_rpt2"/>
    <property type="match status" value="1"/>
</dbReference>
<dbReference type="FunFam" id="2.30.30.140:FF:000052">
    <property type="entry name" value="SAGA-associated factor 29 isoform X6"/>
    <property type="match status" value="1"/>
</dbReference>
<dbReference type="FunFam" id="2.30.30.140:FF:000061">
    <property type="entry name" value="SAGA-associated factor 29 isoform X6"/>
    <property type="match status" value="1"/>
</dbReference>
<dbReference type="Gene3D" id="2.30.30.140">
    <property type="match status" value="2"/>
</dbReference>
<dbReference type="InterPro" id="IPR037802">
    <property type="entry name" value="SGF29"/>
</dbReference>
<dbReference type="InterPro" id="IPR010750">
    <property type="entry name" value="SGF29_tudor-like_dom"/>
</dbReference>
<dbReference type="InterPro" id="IPR047288">
    <property type="entry name" value="Tudor_SGF29_rpt1"/>
</dbReference>
<dbReference type="InterPro" id="IPR047287">
    <property type="entry name" value="Tudor_SGF29_rpt2"/>
</dbReference>
<dbReference type="PANTHER" id="PTHR21539">
    <property type="entry name" value="SAGA-ASSOCIATED FACTOR 29"/>
    <property type="match status" value="1"/>
</dbReference>
<dbReference type="PANTHER" id="PTHR21539:SF0">
    <property type="entry name" value="SAGA-ASSOCIATED FACTOR 29"/>
    <property type="match status" value="1"/>
</dbReference>
<dbReference type="Pfam" id="PF07039">
    <property type="entry name" value="SGF29_Tudor"/>
    <property type="match status" value="1"/>
</dbReference>
<dbReference type="PROSITE" id="PS51518">
    <property type="entry name" value="SGF29_C"/>
    <property type="match status" value="1"/>
</dbReference>
<evidence type="ECO:0000250" key="1">
    <source>
        <dbReference type="UniProtKB" id="Q96ES7"/>
    </source>
</evidence>
<evidence type="ECO:0000255" key="2">
    <source>
        <dbReference type="PROSITE-ProRule" id="PRU00851"/>
    </source>
</evidence>
<evidence type="ECO:0000256" key="3">
    <source>
        <dbReference type="SAM" id="MobiDB-lite"/>
    </source>
</evidence>
<evidence type="ECO:0000269" key="4">
    <source>
    </source>
</evidence>
<evidence type="ECO:0000303" key="5">
    <source>
    </source>
</evidence>
<evidence type="ECO:0000305" key="6"/>
<evidence type="ECO:0000312" key="7">
    <source>
        <dbReference type="Araport" id="AT3G27460"/>
    </source>
</evidence>
<evidence type="ECO:0000312" key="8">
    <source>
        <dbReference type="EMBL" id="BAA95721.1"/>
    </source>
</evidence>
<evidence type="ECO:0007744" key="9">
    <source>
    </source>
</evidence>
<comment type="function">
    <text evidence="1 4">Chromatin reader component of the transcription regulatory histone acetylation (HAT) complex SAGA (By similarity). Involved in salt stress tolerance. Enhances the effect of ADA2B in the positive regulation of salt-induced gene expression (PubMed:21193996).</text>
</comment>
<comment type="subcellular location">
    <subcellularLocation>
        <location evidence="6">Nucleus</location>
    </subcellularLocation>
</comment>
<comment type="tissue specificity">
    <text evidence="4">Expressed in roots, rosette leaves, cauline leaves, stems and flowers.</text>
</comment>
<comment type="domain">
    <text evidence="2">The SGF29 tudor-like domain mediates binding to methylated 'Lys-4' of histone H3 (H3K4me).</text>
</comment>
<comment type="disruption phenotype">
    <text evidence="4">Delayed flowering. Increased tolerance to salt stress.</text>
</comment>
<comment type="similarity">
    <text evidence="2">Belongs to the SGF29 family.</text>
</comment>
<comment type="sequence caution" evidence="6">
    <conflict type="erroneous gene model prediction">
        <sequence resource="EMBL-CDS" id="BAA95721"/>
    </conflict>
</comment>
<sequence length="270" mass="30499">MSSSPDIAGILDNTKELDRLRKEQEEVLVEINKMHKKLQATPEIVEKPGDISLSKLKNLYIQAKELSESEVTVSNILLTQLDSLLPSGPTGQQRRKLEGNEQKRKRMKVDTDVTRVSPSMRNQIEAYASLKGEQVAARVTAEDAEKDEWFVVKVIHFDRETKEVEVLDEEPGDDEEGGGQRTYKLSMSCILPFPKRNDPSSTQEFIPGKHVLAVYPGTTALYKATVISTPRKRKSDEYLLEFDDDEEDGALPQRTVPFHKVVALPEGHRQ</sequence>
<keyword id="KW-0007">Acetylation</keyword>
<keyword id="KW-0156">Chromatin regulator</keyword>
<keyword id="KW-0539">Nucleus</keyword>
<keyword id="KW-1185">Reference proteome</keyword>
<keyword id="KW-0346">Stress response</keyword>
<keyword id="KW-0804">Transcription</keyword>
<keyword id="KW-0805">Transcription regulation</keyword>
<gene>
    <name evidence="5" type="primary">SGF29A</name>
    <name evidence="7" type="ordered locus">At3g27460</name>
    <name evidence="8" type="ORF">K1G2.17</name>
</gene>
<proteinExistence type="evidence at protein level"/>
<organism>
    <name type="scientific">Arabidopsis thaliana</name>
    <name type="common">Mouse-ear cress</name>
    <dbReference type="NCBI Taxonomy" id="3702"/>
    <lineage>
        <taxon>Eukaryota</taxon>
        <taxon>Viridiplantae</taxon>
        <taxon>Streptophyta</taxon>
        <taxon>Embryophyta</taxon>
        <taxon>Tracheophyta</taxon>
        <taxon>Spermatophyta</taxon>
        <taxon>Magnoliopsida</taxon>
        <taxon>eudicotyledons</taxon>
        <taxon>Gunneridae</taxon>
        <taxon>Pentapetalae</taxon>
        <taxon>rosids</taxon>
        <taxon>malvids</taxon>
        <taxon>Brassicales</taxon>
        <taxon>Brassicaceae</taxon>
        <taxon>Camelineae</taxon>
        <taxon>Arabidopsis</taxon>
    </lineage>
</organism>
<name>SG29A_ARATH</name>
<feature type="initiator methionine" description="Removed" evidence="9">
    <location>
        <position position="1"/>
    </location>
</feature>
<feature type="chain" id="PRO_0000443329" description="SAGA-associated factor 29 homolog A">
    <location>
        <begin position="2"/>
        <end position="270"/>
    </location>
</feature>
<feature type="domain" description="SGF29 C-terminal" evidence="2">
    <location>
        <begin position="125"/>
        <end position="270"/>
    </location>
</feature>
<feature type="region of interest" description="Disordered" evidence="3">
    <location>
        <begin position="85"/>
        <end position="113"/>
    </location>
</feature>
<feature type="region of interest" description="Histone H3K4me3 N-terminus binding" evidence="2">
    <location>
        <begin position="168"/>
        <end position="170"/>
    </location>
</feature>
<feature type="region of interest" description="Histone H3K4me3 N-terminus binding" evidence="2">
    <location>
        <begin position="217"/>
        <end position="220"/>
    </location>
</feature>
<feature type="region of interest" description="Histone H3K4me3 binding" evidence="2">
    <location>
        <begin position="242"/>
        <end position="245"/>
    </location>
</feature>
<feature type="compositionally biased region" description="Basic and acidic residues" evidence="3">
    <location>
        <begin position="95"/>
        <end position="113"/>
    </location>
</feature>
<feature type="site" description="Histone H3K4me3 binding" evidence="2">
    <location>
        <position position="215"/>
    </location>
</feature>
<feature type="site" description="Histone H3K4me3 binding" evidence="2">
    <location>
        <position position="222"/>
    </location>
</feature>
<feature type="modified residue" description="N-acetylserine" evidence="9">
    <location>
        <position position="2"/>
    </location>
</feature>